<protein>
    <recommendedName>
        <fullName evidence="1">dCTP deaminase, dUMP-forming</fullName>
        <ecNumber evidence="1">3.5.4.30</ecNumber>
    </recommendedName>
    <alternativeName>
        <fullName evidence="1">Bifunctional dCTP deaminase:dUTPase</fullName>
    </alternativeName>
    <alternativeName>
        <fullName evidence="1">DCD-DUT</fullName>
    </alternativeName>
</protein>
<sequence length="186" mass="20704">MILSDGLIKELISYRALVIEPLSETQIQPSSVDLTLGSTFLAIDNINVPFLDPKRKETIKYREIHIEKGGQLILQPGFFLLGTTTERLMLPNFLVARVEGRSSLGRMGILIHATAGYVDPGFCGQITLEISNVNNIPVALYPGMRICQVSFELLFENCVIPYGLKGKYQGQEGPEGTRIFLDFLKE</sequence>
<dbReference type="EC" id="3.5.4.30" evidence="1"/>
<dbReference type="EMBL" id="CP001145">
    <property type="protein sequence ID" value="ACI17836.1"/>
    <property type="molecule type" value="Genomic_DNA"/>
</dbReference>
<dbReference type="RefSeq" id="WP_012544487.1">
    <property type="nucleotide sequence ID" value="NC_011295.1"/>
</dbReference>
<dbReference type="SMR" id="B5Y8K7"/>
<dbReference type="STRING" id="309798.COPRO5265_0757"/>
<dbReference type="KEGG" id="cpo:COPRO5265_0757"/>
<dbReference type="eggNOG" id="COG0717">
    <property type="taxonomic scope" value="Bacteria"/>
</dbReference>
<dbReference type="HOGENOM" id="CLU_087476_2_1_9"/>
<dbReference type="OrthoDB" id="9780202at2"/>
<dbReference type="UniPathway" id="UPA00610">
    <property type="reaction ID" value="UER00667"/>
</dbReference>
<dbReference type="Proteomes" id="UP000001732">
    <property type="component" value="Chromosome"/>
</dbReference>
<dbReference type="GO" id="GO:0033973">
    <property type="term" value="F:dCTP deaminase (dUMP-forming) activity"/>
    <property type="evidence" value="ECO:0007669"/>
    <property type="project" value="UniProtKB-UniRule"/>
</dbReference>
<dbReference type="GO" id="GO:0008829">
    <property type="term" value="F:dCTP deaminase activity"/>
    <property type="evidence" value="ECO:0007669"/>
    <property type="project" value="InterPro"/>
</dbReference>
<dbReference type="GO" id="GO:0000166">
    <property type="term" value="F:nucleotide binding"/>
    <property type="evidence" value="ECO:0007669"/>
    <property type="project" value="UniProtKB-KW"/>
</dbReference>
<dbReference type="GO" id="GO:0006226">
    <property type="term" value="P:dUMP biosynthetic process"/>
    <property type="evidence" value="ECO:0007669"/>
    <property type="project" value="UniProtKB-UniRule"/>
</dbReference>
<dbReference type="GO" id="GO:0006229">
    <property type="term" value="P:dUTP biosynthetic process"/>
    <property type="evidence" value="ECO:0007669"/>
    <property type="project" value="InterPro"/>
</dbReference>
<dbReference type="GO" id="GO:0015949">
    <property type="term" value="P:nucleobase-containing small molecule interconversion"/>
    <property type="evidence" value="ECO:0007669"/>
    <property type="project" value="TreeGrafter"/>
</dbReference>
<dbReference type="CDD" id="cd07557">
    <property type="entry name" value="trimeric_dUTPase"/>
    <property type="match status" value="1"/>
</dbReference>
<dbReference type="Gene3D" id="2.70.40.10">
    <property type="match status" value="1"/>
</dbReference>
<dbReference type="HAMAP" id="MF_00146">
    <property type="entry name" value="dCTP_deaminase"/>
    <property type="match status" value="1"/>
</dbReference>
<dbReference type="InterPro" id="IPR011962">
    <property type="entry name" value="dCTP_deaminase"/>
</dbReference>
<dbReference type="InterPro" id="IPR036157">
    <property type="entry name" value="dUTPase-like_sf"/>
</dbReference>
<dbReference type="InterPro" id="IPR033704">
    <property type="entry name" value="dUTPase_trimeric"/>
</dbReference>
<dbReference type="NCBIfam" id="TIGR02274">
    <property type="entry name" value="dCTP_deam"/>
    <property type="match status" value="1"/>
</dbReference>
<dbReference type="PANTHER" id="PTHR42680">
    <property type="entry name" value="DCTP DEAMINASE"/>
    <property type="match status" value="1"/>
</dbReference>
<dbReference type="PANTHER" id="PTHR42680:SF3">
    <property type="entry name" value="DCTP DEAMINASE"/>
    <property type="match status" value="1"/>
</dbReference>
<dbReference type="Pfam" id="PF22769">
    <property type="entry name" value="DCD"/>
    <property type="match status" value="1"/>
</dbReference>
<dbReference type="SUPFAM" id="SSF51283">
    <property type="entry name" value="dUTPase-like"/>
    <property type="match status" value="1"/>
</dbReference>
<comment type="function">
    <text evidence="1">Bifunctional enzyme that catalyzes both the deamination of dCTP to dUTP and the hydrolysis of dUTP to dUMP without releasing the toxic dUTP intermediate.</text>
</comment>
<comment type="catalytic activity">
    <reaction evidence="1">
        <text>dCTP + 2 H2O = dUMP + NH4(+) + diphosphate</text>
        <dbReference type="Rhea" id="RHEA:19205"/>
        <dbReference type="ChEBI" id="CHEBI:15377"/>
        <dbReference type="ChEBI" id="CHEBI:28938"/>
        <dbReference type="ChEBI" id="CHEBI:33019"/>
        <dbReference type="ChEBI" id="CHEBI:61481"/>
        <dbReference type="ChEBI" id="CHEBI:246422"/>
        <dbReference type="EC" id="3.5.4.30"/>
    </reaction>
</comment>
<comment type="pathway">
    <text evidence="1">Pyrimidine metabolism; dUMP biosynthesis; dUMP from dCTP: step 1/1.</text>
</comment>
<comment type="subunit">
    <text evidence="1">Homotrimer.</text>
</comment>
<comment type="similarity">
    <text evidence="1">Belongs to the dCTP deaminase family.</text>
</comment>
<evidence type="ECO:0000255" key="1">
    <source>
        <dbReference type="HAMAP-Rule" id="MF_00146"/>
    </source>
</evidence>
<gene>
    <name evidence="1" type="primary">dcd</name>
    <name type="ordered locus">COPRO5265_0757</name>
</gene>
<reference key="1">
    <citation type="submission" date="2008-08" db="EMBL/GenBank/DDBJ databases">
        <title>The complete genome sequence of Coprothermobacter proteolyticus strain ATCC 5245 / DSM 5265 / BT.</title>
        <authorList>
            <person name="Dodson R.J."/>
            <person name="Durkin A.S."/>
            <person name="Wu M."/>
            <person name="Eisen J."/>
            <person name="Sutton G."/>
        </authorList>
    </citation>
    <scope>NUCLEOTIDE SEQUENCE [LARGE SCALE GENOMIC DNA]</scope>
    <source>
        <strain>ATCC 35245 / DSM 5265 / OCM 4 / BT</strain>
    </source>
</reference>
<feature type="chain" id="PRO_1000096417" description="dCTP deaminase, dUMP-forming">
    <location>
        <begin position="1"/>
        <end position="186"/>
    </location>
</feature>
<feature type="active site" description="Proton donor/acceptor" evidence="1">
    <location>
        <position position="129"/>
    </location>
</feature>
<feature type="binding site" evidence="1">
    <location>
        <begin position="101"/>
        <end position="106"/>
    </location>
    <ligand>
        <name>dCTP</name>
        <dbReference type="ChEBI" id="CHEBI:61481"/>
    </ligand>
</feature>
<feature type="binding site" evidence="1">
    <location>
        <position position="119"/>
    </location>
    <ligand>
        <name>dCTP</name>
        <dbReference type="ChEBI" id="CHEBI:61481"/>
    </ligand>
</feature>
<feature type="binding site" evidence="1">
    <location>
        <begin position="127"/>
        <end position="129"/>
    </location>
    <ligand>
        <name>dCTP</name>
        <dbReference type="ChEBI" id="CHEBI:61481"/>
    </ligand>
</feature>
<feature type="binding site" evidence="1">
    <location>
        <position position="148"/>
    </location>
    <ligand>
        <name>dCTP</name>
        <dbReference type="ChEBI" id="CHEBI:61481"/>
    </ligand>
</feature>
<feature type="binding site" evidence="1">
    <location>
        <position position="162"/>
    </location>
    <ligand>
        <name>dCTP</name>
        <dbReference type="ChEBI" id="CHEBI:61481"/>
    </ligand>
</feature>
<feature type="binding site" evidence="1">
    <location>
        <position position="171"/>
    </location>
    <ligand>
        <name>dCTP</name>
        <dbReference type="ChEBI" id="CHEBI:61481"/>
    </ligand>
</feature>
<feature type="site" description="Important for bifunctional activity" evidence="1">
    <location>
        <begin position="116"/>
        <end position="117"/>
    </location>
</feature>
<proteinExistence type="inferred from homology"/>
<keyword id="KW-0378">Hydrolase</keyword>
<keyword id="KW-0546">Nucleotide metabolism</keyword>
<keyword id="KW-0547">Nucleotide-binding</keyword>
<keyword id="KW-1185">Reference proteome</keyword>
<name>DCDB_COPPD</name>
<organism>
    <name type="scientific">Coprothermobacter proteolyticus (strain ATCC 35245 / DSM 5265 / OCM 4 / BT)</name>
    <dbReference type="NCBI Taxonomy" id="309798"/>
    <lineage>
        <taxon>Bacteria</taxon>
        <taxon>Pseudomonadati</taxon>
        <taxon>Coprothermobacterota</taxon>
        <taxon>Coprothermobacteria</taxon>
        <taxon>Coprothermobacterales</taxon>
        <taxon>Coprothermobacteraceae</taxon>
        <taxon>Coprothermobacter</taxon>
    </lineage>
</organism>
<accession>B5Y8K7</accession>